<protein>
    <recommendedName>
        <fullName>Somatotropin</fullName>
    </recommendedName>
    <alternativeName>
        <fullName>Growth hormone</fullName>
    </alternativeName>
</protein>
<comment type="function">
    <text>Growth hormone plays an important role in growth control and is involved in the regulation of several anabolic processes. Implicated as an osmoregulatory substance important for seawater adaptation.</text>
</comment>
<comment type="subcellular location">
    <subcellularLocation>
        <location>Secreted</location>
    </subcellularLocation>
</comment>
<comment type="similarity">
    <text evidence="2">Belongs to the somatotropin/prolactin family.</text>
</comment>
<reference key="1">
    <citation type="journal article" date="1997" name="Gene">
        <title>Genomic structure and sequence of the pufferfish (Fugu rubripes) growth hormone-encoding gene: a comparative analysis of teleost growth hormone genes.</title>
        <authorList>
            <person name="Venkatesh B."/>
            <person name="Brenner S."/>
        </authorList>
    </citation>
    <scope>NUCLEOTIDE SEQUENCE [GENOMIC DNA]</scope>
</reference>
<proteinExistence type="inferred from homology"/>
<name>SOMA_TAKRU</name>
<organism>
    <name type="scientific">Takifugu rubripes</name>
    <name type="common">Japanese pufferfish</name>
    <name type="synonym">Fugu rubripes</name>
    <dbReference type="NCBI Taxonomy" id="31033"/>
    <lineage>
        <taxon>Eukaryota</taxon>
        <taxon>Metazoa</taxon>
        <taxon>Chordata</taxon>
        <taxon>Craniata</taxon>
        <taxon>Vertebrata</taxon>
        <taxon>Euteleostomi</taxon>
        <taxon>Actinopterygii</taxon>
        <taxon>Neopterygii</taxon>
        <taxon>Teleostei</taxon>
        <taxon>Neoteleostei</taxon>
        <taxon>Acanthomorphata</taxon>
        <taxon>Eupercaria</taxon>
        <taxon>Tetraodontiformes</taxon>
        <taxon>Tetradontoidea</taxon>
        <taxon>Tetraodontidae</taxon>
        <taxon>Takifugu</taxon>
    </lineage>
</organism>
<accession>O12980</accession>
<sequence length="196" mass="22081">MDKVILVLLMSLGASSQPLTDTPRLFSMAVSRVQHLHLLAQRLFADFESSLQTDEQRQLNKKFLPFCNSDSIISPNDKHETQRSSVLKLLSISYRLIESWDFPSLSLSGGLSPKLSDLKTGILLLIKASQDGADMFSESTTLQLGPYENYYQNLGGEEPLKRTYELLTCFKKDMHKVETYLTVAKCRLSPEANCTL</sequence>
<keyword id="KW-1015">Disulfide bond</keyword>
<keyword id="KW-0372">Hormone</keyword>
<keyword id="KW-0479">Metal-binding</keyword>
<keyword id="KW-0873">Pyrrolidone carboxylic acid</keyword>
<keyword id="KW-1185">Reference proteome</keyword>
<keyword id="KW-0964">Secreted</keyword>
<keyword id="KW-0732">Signal</keyword>
<keyword id="KW-0862">Zinc</keyword>
<dbReference type="EMBL" id="U63807">
    <property type="protein sequence ID" value="AAC60105.1"/>
    <property type="molecule type" value="Genomic_DNA"/>
</dbReference>
<dbReference type="SMR" id="O12980"/>
<dbReference type="FunCoup" id="O12980">
    <property type="interactions" value="1794"/>
</dbReference>
<dbReference type="STRING" id="31033.ENSTRUP00000048994"/>
<dbReference type="Ensembl" id="ENSTRUT00000052286.2">
    <property type="protein sequence ID" value="ENSTRUP00000048994.2"/>
    <property type="gene ID" value="ENSTRUG00000002048.3"/>
</dbReference>
<dbReference type="eggNOG" id="ENOG502R5GJ">
    <property type="taxonomic scope" value="Eukaryota"/>
</dbReference>
<dbReference type="GeneTree" id="ENSGT00950000182818"/>
<dbReference type="InParanoid" id="O12980"/>
<dbReference type="OMA" id="VAYCYSE"/>
<dbReference type="OrthoDB" id="9925773at2759"/>
<dbReference type="Proteomes" id="UP000005226">
    <property type="component" value="Chromosome 5"/>
</dbReference>
<dbReference type="GO" id="GO:0005615">
    <property type="term" value="C:extracellular space"/>
    <property type="evidence" value="ECO:0007669"/>
    <property type="project" value="InterPro"/>
</dbReference>
<dbReference type="GO" id="GO:0070186">
    <property type="term" value="F:growth hormone activity"/>
    <property type="evidence" value="ECO:0007669"/>
    <property type="project" value="TreeGrafter"/>
</dbReference>
<dbReference type="GO" id="GO:0005131">
    <property type="term" value="F:growth hormone receptor binding"/>
    <property type="evidence" value="ECO:0007669"/>
    <property type="project" value="InterPro"/>
</dbReference>
<dbReference type="GO" id="GO:0046872">
    <property type="term" value="F:metal ion binding"/>
    <property type="evidence" value="ECO:0007669"/>
    <property type="project" value="UniProtKB-KW"/>
</dbReference>
<dbReference type="GO" id="GO:0048513">
    <property type="term" value="P:animal organ development"/>
    <property type="evidence" value="ECO:0007669"/>
    <property type="project" value="TreeGrafter"/>
</dbReference>
<dbReference type="GO" id="GO:0060396">
    <property type="term" value="P:growth hormone receptor signaling pathway"/>
    <property type="evidence" value="ECO:0007669"/>
    <property type="project" value="TreeGrafter"/>
</dbReference>
<dbReference type="GO" id="GO:0045927">
    <property type="term" value="P:positive regulation of growth"/>
    <property type="evidence" value="ECO:0007669"/>
    <property type="project" value="TreeGrafter"/>
</dbReference>
<dbReference type="GO" id="GO:0046427">
    <property type="term" value="P:positive regulation of receptor signaling pathway via JAK-STAT"/>
    <property type="evidence" value="ECO:0007669"/>
    <property type="project" value="TreeGrafter"/>
</dbReference>
<dbReference type="GO" id="GO:0031667">
    <property type="term" value="P:response to nutrient levels"/>
    <property type="evidence" value="ECO:0007669"/>
    <property type="project" value="TreeGrafter"/>
</dbReference>
<dbReference type="CDD" id="cd10285">
    <property type="entry name" value="somatotropin_like"/>
    <property type="match status" value="1"/>
</dbReference>
<dbReference type="FunFam" id="1.20.1250.10:FF:000009">
    <property type="entry name" value="Growth hormone"/>
    <property type="match status" value="1"/>
</dbReference>
<dbReference type="Gene3D" id="1.20.1250.10">
    <property type="match status" value="1"/>
</dbReference>
<dbReference type="InterPro" id="IPR009079">
    <property type="entry name" value="4_helix_cytokine-like_core"/>
</dbReference>
<dbReference type="InterPro" id="IPR034975">
    <property type="entry name" value="Somatotropin"/>
</dbReference>
<dbReference type="InterPro" id="IPR001400">
    <property type="entry name" value="Somatotropin/Prolactin"/>
</dbReference>
<dbReference type="InterPro" id="IPR018116">
    <property type="entry name" value="Somatotropin_CS"/>
</dbReference>
<dbReference type="PANTHER" id="PTHR11417:SF2">
    <property type="entry name" value="SOMATOTROPIN"/>
    <property type="match status" value="1"/>
</dbReference>
<dbReference type="PANTHER" id="PTHR11417">
    <property type="entry name" value="SOMATOTROPIN,PROLACTIN"/>
    <property type="match status" value="1"/>
</dbReference>
<dbReference type="Pfam" id="PF00103">
    <property type="entry name" value="Hormone_1"/>
    <property type="match status" value="2"/>
</dbReference>
<dbReference type="PRINTS" id="PR00836">
    <property type="entry name" value="SOMATOTROPIN"/>
</dbReference>
<dbReference type="SUPFAM" id="SSF47266">
    <property type="entry name" value="4-helical cytokines"/>
    <property type="match status" value="1"/>
</dbReference>
<dbReference type="PROSITE" id="PS00266">
    <property type="entry name" value="SOMATOTROPIN_1"/>
    <property type="match status" value="1"/>
</dbReference>
<dbReference type="PROSITE" id="PS00338">
    <property type="entry name" value="SOMATOTROPIN_2"/>
    <property type="match status" value="1"/>
</dbReference>
<evidence type="ECO:0000250" key="1"/>
<evidence type="ECO:0000305" key="2"/>
<gene>
    <name type="primary">gh</name>
</gene>
<feature type="signal peptide" evidence="1">
    <location>
        <begin position="1"/>
        <end position="16"/>
    </location>
</feature>
<feature type="chain" id="PRO_0000033023" description="Somatotropin">
    <location>
        <begin position="17"/>
        <end position="196"/>
    </location>
</feature>
<feature type="binding site" evidence="1">
    <location>
        <position position="35"/>
    </location>
    <ligand>
        <name>Zn(2+)</name>
        <dbReference type="ChEBI" id="CHEBI:29105"/>
    </ligand>
</feature>
<feature type="binding site" evidence="1">
    <location>
        <position position="178"/>
    </location>
    <ligand>
        <name>Zn(2+)</name>
        <dbReference type="ChEBI" id="CHEBI:29105"/>
    </ligand>
</feature>
<feature type="modified residue" description="Pyrrolidone carboxylic acid" evidence="1">
    <location>
        <position position="17"/>
    </location>
</feature>
<feature type="disulfide bond" evidence="1">
    <location>
        <begin position="67"/>
        <end position="169"/>
    </location>
</feature>
<feature type="disulfide bond" evidence="1">
    <location>
        <begin position="186"/>
        <end position="194"/>
    </location>
</feature>